<accession>A7GG20</accession>
<proteinExistence type="inferred from homology"/>
<gene>
    <name evidence="1" type="primary">frr</name>
    <name type="ordered locus">CLI_2488</name>
</gene>
<organism>
    <name type="scientific">Clostridium botulinum (strain Langeland / NCTC 10281 / Type F)</name>
    <dbReference type="NCBI Taxonomy" id="441772"/>
    <lineage>
        <taxon>Bacteria</taxon>
        <taxon>Bacillati</taxon>
        <taxon>Bacillota</taxon>
        <taxon>Clostridia</taxon>
        <taxon>Eubacteriales</taxon>
        <taxon>Clostridiaceae</taxon>
        <taxon>Clostridium</taxon>
    </lineage>
</organism>
<feature type="chain" id="PRO_1000003142" description="Ribosome-recycling factor">
    <location>
        <begin position="1"/>
        <end position="184"/>
    </location>
</feature>
<comment type="function">
    <text evidence="1">Responsible for the release of ribosomes from messenger RNA at the termination of protein biosynthesis. May increase the efficiency of translation by recycling ribosomes from one round of translation to another.</text>
</comment>
<comment type="subcellular location">
    <subcellularLocation>
        <location evidence="1">Cytoplasm</location>
    </subcellularLocation>
</comment>
<comment type="similarity">
    <text evidence="1">Belongs to the RRF family.</text>
</comment>
<sequence length="184" mass="20619">MIKEILKKADEKMGKTIVALKRELASMKAGRANPAMLDRIEAEYYGSMTPLNQLGNISIPEARVLLIQPWDKSALSAIEKAILKSDLGLNPSNDGTVIRLVIPELTEETRKNIVKTVKKTGEEAKVAIRSIRRDCNDDVKNLKKDDVSEDDIKKAEDDIQKKTDKYIKEIDSIISAKEKEILSI</sequence>
<evidence type="ECO:0000255" key="1">
    <source>
        <dbReference type="HAMAP-Rule" id="MF_00040"/>
    </source>
</evidence>
<reference key="1">
    <citation type="submission" date="2007-06" db="EMBL/GenBank/DDBJ databases">
        <authorList>
            <person name="Brinkac L.M."/>
            <person name="Daugherty S."/>
            <person name="Dodson R.J."/>
            <person name="Madupu R."/>
            <person name="Brown J.L."/>
            <person name="Bruce D."/>
            <person name="Detter C."/>
            <person name="Munk C."/>
            <person name="Smith L.A."/>
            <person name="Smith T.J."/>
            <person name="White O."/>
            <person name="Brettin T.S."/>
        </authorList>
    </citation>
    <scope>NUCLEOTIDE SEQUENCE [LARGE SCALE GENOMIC DNA]</scope>
    <source>
        <strain>Langeland / NCTC 10281 / Type F</strain>
    </source>
</reference>
<keyword id="KW-0963">Cytoplasm</keyword>
<keyword id="KW-0648">Protein biosynthesis</keyword>
<protein>
    <recommendedName>
        <fullName evidence="1">Ribosome-recycling factor</fullName>
        <shortName evidence="1">RRF</shortName>
    </recommendedName>
    <alternativeName>
        <fullName evidence="1">Ribosome-releasing factor</fullName>
    </alternativeName>
</protein>
<name>RRF_CLOBL</name>
<dbReference type="EMBL" id="CP000728">
    <property type="protein sequence ID" value="ABS41590.1"/>
    <property type="molecule type" value="Genomic_DNA"/>
</dbReference>
<dbReference type="RefSeq" id="WP_012100383.1">
    <property type="nucleotide sequence ID" value="NC_009699.1"/>
</dbReference>
<dbReference type="SMR" id="A7GG20"/>
<dbReference type="KEGG" id="cbf:CLI_2488"/>
<dbReference type="HOGENOM" id="CLU_073981_2_0_9"/>
<dbReference type="Proteomes" id="UP000002410">
    <property type="component" value="Chromosome"/>
</dbReference>
<dbReference type="GO" id="GO:0005737">
    <property type="term" value="C:cytoplasm"/>
    <property type="evidence" value="ECO:0007669"/>
    <property type="project" value="UniProtKB-SubCell"/>
</dbReference>
<dbReference type="GO" id="GO:0043023">
    <property type="term" value="F:ribosomal large subunit binding"/>
    <property type="evidence" value="ECO:0007669"/>
    <property type="project" value="TreeGrafter"/>
</dbReference>
<dbReference type="GO" id="GO:0006415">
    <property type="term" value="P:translational termination"/>
    <property type="evidence" value="ECO:0007669"/>
    <property type="project" value="UniProtKB-UniRule"/>
</dbReference>
<dbReference type="CDD" id="cd00520">
    <property type="entry name" value="RRF"/>
    <property type="match status" value="1"/>
</dbReference>
<dbReference type="FunFam" id="1.10.132.20:FF:000001">
    <property type="entry name" value="Ribosome-recycling factor"/>
    <property type="match status" value="1"/>
</dbReference>
<dbReference type="FunFam" id="3.30.1360.40:FF:000001">
    <property type="entry name" value="Ribosome-recycling factor"/>
    <property type="match status" value="1"/>
</dbReference>
<dbReference type="Gene3D" id="3.30.1360.40">
    <property type="match status" value="1"/>
</dbReference>
<dbReference type="Gene3D" id="1.10.132.20">
    <property type="entry name" value="Ribosome-recycling factor"/>
    <property type="match status" value="1"/>
</dbReference>
<dbReference type="HAMAP" id="MF_00040">
    <property type="entry name" value="RRF"/>
    <property type="match status" value="1"/>
</dbReference>
<dbReference type="InterPro" id="IPR002661">
    <property type="entry name" value="Ribosome_recyc_fac"/>
</dbReference>
<dbReference type="InterPro" id="IPR023584">
    <property type="entry name" value="Ribosome_recyc_fac_dom"/>
</dbReference>
<dbReference type="InterPro" id="IPR036191">
    <property type="entry name" value="RRF_sf"/>
</dbReference>
<dbReference type="NCBIfam" id="TIGR00496">
    <property type="entry name" value="frr"/>
    <property type="match status" value="1"/>
</dbReference>
<dbReference type="PANTHER" id="PTHR20982:SF3">
    <property type="entry name" value="MITOCHONDRIAL RIBOSOME RECYCLING FACTOR PSEUDO 1"/>
    <property type="match status" value="1"/>
</dbReference>
<dbReference type="PANTHER" id="PTHR20982">
    <property type="entry name" value="RIBOSOME RECYCLING FACTOR"/>
    <property type="match status" value="1"/>
</dbReference>
<dbReference type="Pfam" id="PF01765">
    <property type="entry name" value="RRF"/>
    <property type="match status" value="1"/>
</dbReference>
<dbReference type="SUPFAM" id="SSF55194">
    <property type="entry name" value="Ribosome recycling factor, RRF"/>
    <property type="match status" value="1"/>
</dbReference>